<organism>
    <name type="scientific">Salmonella paratyphi B (strain ATCC BAA-1250 / SPB7)</name>
    <dbReference type="NCBI Taxonomy" id="1016998"/>
    <lineage>
        <taxon>Bacteria</taxon>
        <taxon>Pseudomonadati</taxon>
        <taxon>Pseudomonadota</taxon>
        <taxon>Gammaproteobacteria</taxon>
        <taxon>Enterobacterales</taxon>
        <taxon>Enterobacteriaceae</taxon>
        <taxon>Salmonella</taxon>
    </lineage>
</organism>
<reference key="1">
    <citation type="submission" date="2007-11" db="EMBL/GenBank/DDBJ databases">
        <authorList>
            <consortium name="The Salmonella enterica serovar Paratyphi B Genome Sequencing Project"/>
            <person name="McClelland M."/>
            <person name="Sanderson E.K."/>
            <person name="Porwollik S."/>
            <person name="Spieth J."/>
            <person name="Clifton W.S."/>
            <person name="Fulton R."/>
            <person name="Cordes M."/>
            <person name="Wollam A."/>
            <person name="Shah N."/>
            <person name="Pepin K."/>
            <person name="Bhonagiri V."/>
            <person name="Nash W."/>
            <person name="Johnson M."/>
            <person name="Thiruvilangam P."/>
            <person name="Wilson R."/>
        </authorList>
    </citation>
    <scope>NUCLEOTIDE SEQUENCE [LARGE SCALE GENOMIC DNA]</scope>
    <source>
        <strain>ATCC BAA-1250 / SPB7</strain>
    </source>
</reference>
<feature type="chain" id="PRO_1000077920" description="UvrABC system protein B">
    <location>
        <begin position="1"/>
        <end position="673"/>
    </location>
</feature>
<feature type="domain" description="Helicase ATP-binding" evidence="1">
    <location>
        <begin position="26"/>
        <end position="183"/>
    </location>
</feature>
<feature type="domain" description="Helicase C-terminal" evidence="1">
    <location>
        <begin position="431"/>
        <end position="597"/>
    </location>
</feature>
<feature type="domain" description="UVR" evidence="1">
    <location>
        <begin position="633"/>
        <end position="668"/>
    </location>
</feature>
<feature type="short sequence motif" description="Beta-hairpin">
    <location>
        <begin position="92"/>
        <end position="115"/>
    </location>
</feature>
<feature type="binding site" evidence="1">
    <location>
        <begin position="39"/>
        <end position="46"/>
    </location>
    <ligand>
        <name>ATP</name>
        <dbReference type="ChEBI" id="CHEBI:30616"/>
    </ligand>
</feature>
<evidence type="ECO:0000255" key="1">
    <source>
        <dbReference type="HAMAP-Rule" id="MF_00204"/>
    </source>
</evidence>
<dbReference type="EMBL" id="CP000886">
    <property type="protein sequence ID" value="ABX68097.1"/>
    <property type="molecule type" value="Genomic_DNA"/>
</dbReference>
<dbReference type="RefSeq" id="WP_000042502.1">
    <property type="nucleotide sequence ID" value="NC_010102.1"/>
</dbReference>
<dbReference type="SMR" id="A9MTI2"/>
<dbReference type="KEGG" id="spq:SPAB_02719"/>
<dbReference type="PATRIC" id="fig|1016998.12.peg.2572"/>
<dbReference type="HOGENOM" id="CLU_009621_2_1_6"/>
<dbReference type="BioCyc" id="SENT1016998:SPAB_RS11050-MONOMER"/>
<dbReference type="Proteomes" id="UP000008556">
    <property type="component" value="Chromosome"/>
</dbReference>
<dbReference type="GO" id="GO:0005737">
    <property type="term" value="C:cytoplasm"/>
    <property type="evidence" value="ECO:0007669"/>
    <property type="project" value="UniProtKB-SubCell"/>
</dbReference>
<dbReference type="GO" id="GO:0009380">
    <property type="term" value="C:excinuclease repair complex"/>
    <property type="evidence" value="ECO:0007669"/>
    <property type="project" value="InterPro"/>
</dbReference>
<dbReference type="GO" id="GO:0005524">
    <property type="term" value="F:ATP binding"/>
    <property type="evidence" value="ECO:0007669"/>
    <property type="project" value="UniProtKB-UniRule"/>
</dbReference>
<dbReference type="GO" id="GO:0016887">
    <property type="term" value="F:ATP hydrolysis activity"/>
    <property type="evidence" value="ECO:0007669"/>
    <property type="project" value="InterPro"/>
</dbReference>
<dbReference type="GO" id="GO:0003677">
    <property type="term" value="F:DNA binding"/>
    <property type="evidence" value="ECO:0007669"/>
    <property type="project" value="UniProtKB-UniRule"/>
</dbReference>
<dbReference type="GO" id="GO:0009381">
    <property type="term" value="F:excinuclease ABC activity"/>
    <property type="evidence" value="ECO:0007669"/>
    <property type="project" value="UniProtKB-UniRule"/>
</dbReference>
<dbReference type="GO" id="GO:0004386">
    <property type="term" value="F:helicase activity"/>
    <property type="evidence" value="ECO:0007669"/>
    <property type="project" value="UniProtKB-KW"/>
</dbReference>
<dbReference type="GO" id="GO:0006289">
    <property type="term" value="P:nucleotide-excision repair"/>
    <property type="evidence" value="ECO:0007669"/>
    <property type="project" value="UniProtKB-UniRule"/>
</dbReference>
<dbReference type="GO" id="GO:0009432">
    <property type="term" value="P:SOS response"/>
    <property type="evidence" value="ECO:0007669"/>
    <property type="project" value="UniProtKB-UniRule"/>
</dbReference>
<dbReference type="CDD" id="cd17916">
    <property type="entry name" value="DEXHc_UvrB"/>
    <property type="match status" value="1"/>
</dbReference>
<dbReference type="CDD" id="cd18790">
    <property type="entry name" value="SF2_C_UvrB"/>
    <property type="match status" value="1"/>
</dbReference>
<dbReference type="FunFam" id="3.40.50.300:FF:000257">
    <property type="entry name" value="UvrABC system protein B"/>
    <property type="match status" value="1"/>
</dbReference>
<dbReference type="FunFam" id="3.40.50.300:FF:000401">
    <property type="entry name" value="UvrABC system protein B"/>
    <property type="match status" value="1"/>
</dbReference>
<dbReference type="FunFam" id="3.40.50.300:FF:000477">
    <property type="entry name" value="UvrABC system protein B"/>
    <property type="match status" value="1"/>
</dbReference>
<dbReference type="Gene3D" id="6.10.140.240">
    <property type="match status" value="1"/>
</dbReference>
<dbReference type="Gene3D" id="3.40.50.300">
    <property type="entry name" value="P-loop containing nucleotide triphosphate hydrolases"/>
    <property type="match status" value="3"/>
</dbReference>
<dbReference type="Gene3D" id="4.10.860.10">
    <property type="entry name" value="UVR domain"/>
    <property type="match status" value="1"/>
</dbReference>
<dbReference type="HAMAP" id="MF_00204">
    <property type="entry name" value="UvrB"/>
    <property type="match status" value="1"/>
</dbReference>
<dbReference type="InterPro" id="IPR006935">
    <property type="entry name" value="Helicase/UvrB_N"/>
</dbReference>
<dbReference type="InterPro" id="IPR014001">
    <property type="entry name" value="Helicase_ATP-bd"/>
</dbReference>
<dbReference type="InterPro" id="IPR001650">
    <property type="entry name" value="Helicase_C-like"/>
</dbReference>
<dbReference type="InterPro" id="IPR027417">
    <property type="entry name" value="P-loop_NTPase"/>
</dbReference>
<dbReference type="InterPro" id="IPR001943">
    <property type="entry name" value="UVR_dom"/>
</dbReference>
<dbReference type="InterPro" id="IPR036876">
    <property type="entry name" value="UVR_dom_sf"/>
</dbReference>
<dbReference type="InterPro" id="IPR004807">
    <property type="entry name" value="UvrB"/>
</dbReference>
<dbReference type="InterPro" id="IPR041471">
    <property type="entry name" value="UvrB_inter"/>
</dbReference>
<dbReference type="InterPro" id="IPR024759">
    <property type="entry name" value="UvrB_YAD/RRR_dom"/>
</dbReference>
<dbReference type="NCBIfam" id="NF003673">
    <property type="entry name" value="PRK05298.1"/>
    <property type="match status" value="1"/>
</dbReference>
<dbReference type="NCBIfam" id="TIGR00631">
    <property type="entry name" value="uvrb"/>
    <property type="match status" value="1"/>
</dbReference>
<dbReference type="PANTHER" id="PTHR24029">
    <property type="entry name" value="UVRABC SYSTEM PROTEIN B"/>
    <property type="match status" value="1"/>
</dbReference>
<dbReference type="PANTHER" id="PTHR24029:SF0">
    <property type="entry name" value="UVRABC SYSTEM PROTEIN B"/>
    <property type="match status" value="1"/>
</dbReference>
<dbReference type="Pfam" id="PF00271">
    <property type="entry name" value="Helicase_C"/>
    <property type="match status" value="1"/>
</dbReference>
<dbReference type="Pfam" id="PF04851">
    <property type="entry name" value="ResIII"/>
    <property type="match status" value="1"/>
</dbReference>
<dbReference type="Pfam" id="PF02151">
    <property type="entry name" value="UVR"/>
    <property type="match status" value="1"/>
</dbReference>
<dbReference type="Pfam" id="PF12344">
    <property type="entry name" value="UvrB"/>
    <property type="match status" value="1"/>
</dbReference>
<dbReference type="Pfam" id="PF17757">
    <property type="entry name" value="UvrB_inter"/>
    <property type="match status" value="1"/>
</dbReference>
<dbReference type="SMART" id="SM00487">
    <property type="entry name" value="DEXDc"/>
    <property type="match status" value="1"/>
</dbReference>
<dbReference type="SMART" id="SM00490">
    <property type="entry name" value="HELICc"/>
    <property type="match status" value="1"/>
</dbReference>
<dbReference type="SUPFAM" id="SSF46600">
    <property type="entry name" value="C-terminal UvrC-binding domain of UvrB"/>
    <property type="match status" value="1"/>
</dbReference>
<dbReference type="SUPFAM" id="SSF52540">
    <property type="entry name" value="P-loop containing nucleoside triphosphate hydrolases"/>
    <property type="match status" value="2"/>
</dbReference>
<dbReference type="PROSITE" id="PS51192">
    <property type="entry name" value="HELICASE_ATP_BIND_1"/>
    <property type="match status" value="1"/>
</dbReference>
<dbReference type="PROSITE" id="PS51194">
    <property type="entry name" value="HELICASE_CTER"/>
    <property type="match status" value="1"/>
</dbReference>
<dbReference type="PROSITE" id="PS50151">
    <property type="entry name" value="UVR"/>
    <property type="match status" value="1"/>
</dbReference>
<keyword id="KW-0067">ATP-binding</keyword>
<keyword id="KW-0963">Cytoplasm</keyword>
<keyword id="KW-0227">DNA damage</keyword>
<keyword id="KW-0228">DNA excision</keyword>
<keyword id="KW-0234">DNA repair</keyword>
<keyword id="KW-0267">Excision nuclease</keyword>
<keyword id="KW-0347">Helicase</keyword>
<keyword id="KW-0378">Hydrolase</keyword>
<keyword id="KW-0547">Nucleotide-binding</keyword>
<keyword id="KW-0742">SOS response</keyword>
<name>UVRB_SALPB</name>
<accession>A9MTI2</accession>
<sequence>MSKPFKLNSAFKPSGDQPDAIRRLEEGLEDGLAHQTLLGVTGSGKTFTIANVIADLQRPTMVLAPNKTLAAQLYGEMKEFFPENAVEYFVSYYDYYQPEAYVPSSDTFIEKDASVNEHIEQMRLSATKALLERRDVVVVASVSAIYGLGDPDLYLKMMLHLTVGMLIDQRAILRRLAELQYTRNDQAFQRGTFRVRGEVIDIFPAESDDIALRVELFDEEVERLSLFDPLTGQVESTVPRYTIYPKTHYVTPRERILQAMEEIKDELADRRKVLLANNKLLEEQRLSQRTQFDLEMMNELGYCSGIENYSRFLSGRGPGEPPPTLFDYLPADGLLVVDESHVTIPQIGGMYRGDRARKETLVEYGFRLPSALDNRPLKFEEFEALAPQTIYVSATPGNYELEKSGDEVVDQVVRPTGLLDPIIEVRPVATQVDDLLSEIRQRAAINERVLVTTLTKRMAEDLTEYLEEHGERVRYLHSDIDTVERMEIIRDLRLGEFDVLVGINLLREGLDMPEVSLVAILDADKEGFLRSERSLIQTIGRAARNVNGKAILYGDKITPSMAKAIGETERRREKQQKYNEEHGITPQGLNKKVVDILALGQNIAKTKAKGKGKGRSTAKAGIVELDMTPKALQQKIHELEGQMMQHAQNLEFEEAAQIRDQLHQLRELFIAAS</sequence>
<gene>
    <name evidence="1" type="primary">uvrB</name>
    <name type="ordered locus">SPAB_02719</name>
</gene>
<protein>
    <recommendedName>
        <fullName evidence="1">UvrABC system protein B</fullName>
        <shortName evidence="1">Protein UvrB</shortName>
    </recommendedName>
    <alternativeName>
        <fullName evidence="1">Excinuclease ABC subunit B</fullName>
    </alternativeName>
</protein>
<proteinExistence type="inferred from homology"/>
<comment type="function">
    <text evidence="1">The UvrABC repair system catalyzes the recognition and processing of DNA lesions. A damage recognition complex composed of 2 UvrA and 2 UvrB subunits scans DNA for abnormalities. Upon binding of the UvrA(2)B(2) complex to a putative damaged site, the DNA wraps around one UvrB monomer. DNA wrap is dependent on ATP binding by UvrB and probably causes local melting of the DNA helix, facilitating insertion of UvrB beta-hairpin between the DNA strands. Then UvrB probes one DNA strand for the presence of a lesion. If a lesion is found the UvrA subunits dissociate and the UvrB-DNA preincision complex is formed. This complex is subsequently bound by UvrC and the second UvrB is released. If no lesion is found, the DNA wraps around the other UvrB subunit that will check the other stand for damage.</text>
</comment>
<comment type="subunit">
    <text evidence="1">Forms a heterotetramer with UvrA during the search for lesions. Interacts with UvrC in an incision complex.</text>
</comment>
<comment type="subcellular location">
    <subcellularLocation>
        <location evidence="1">Cytoplasm</location>
    </subcellularLocation>
</comment>
<comment type="domain">
    <text evidence="1">The beta-hairpin motif is involved in DNA binding.</text>
</comment>
<comment type="similarity">
    <text evidence="1">Belongs to the UvrB family.</text>
</comment>